<dbReference type="EC" id="4.2.1.59" evidence="1"/>
<dbReference type="EMBL" id="CP001252">
    <property type="protein sequence ID" value="ACK47377.1"/>
    <property type="molecule type" value="Genomic_DNA"/>
</dbReference>
<dbReference type="RefSeq" id="WP_006080990.1">
    <property type="nucleotide sequence ID" value="NC_011663.1"/>
</dbReference>
<dbReference type="SMR" id="B8E7Q5"/>
<dbReference type="GeneID" id="11771739"/>
<dbReference type="KEGG" id="sbp:Sbal223_2891"/>
<dbReference type="HOGENOM" id="CLU_078912_1_0_6"/>
<dbReference type="Proteomes" id="UP000002507">
    <property type="component" value="Chromosome"/>
</dbReference>
<dbReference type="GO" id="GO:0005737">
    <property type="term" value="C:cytoplasm"/>
    <property type="evidence" value="ECO:0007669"/>
    <property type="project" value="UniProtKB-SubCell"/>
</dbReference>
<dbReference type="GO" id="GO:0016020">
    <property type="term" value="C:membrane"/>
    <property type="evidence" value="ECO:0007669"/>
    <property type="project" value="GOC"/>
</dbReference>
<dbReference type="GO" id="GO:0019171">
    <property type="term" value="F:(3R)-hydroxyacyl-[acyl-carrier-protein] dehydratase activity"/>
    <property type="evidence" value="ECO:0007669"/>
    <property type="project" value="UniProtKB-EC"/>
</dbReference>
<dbReference type="GO" id="GO:0006633">
    <property type="term" value="P:fatty acid biosynthetic process"/>
    <property type="evidence" value="ECO:0007669"/>
    <property type="project" value="UniProtKB-UniRule"/>
</dbReference>
<dbReference type="GO" id="GO:0009245">
    <property type="term" value="P:lipid A biosynthetic process"/>
    <property type="evidence" value="ECO:0007669"/>
    <property type="project" value="UniProtKB-UniRule"/>
</dbReference>
<dbReference type="CDD" id="cd01288">
    <property type="entry name" value="FabZ"/>
    <property type="match status" value="1"/>
</dbReference>
<dbReference type="FunFam" id="3.10.129.10:FF:000001">
    <property type="entry name" value="3-hydroxyacyl-[acyl-carrier-protein] dehydratase FabZ"/>
    <property type="match status" value="1"/>
</dbReference>
<dbReference type="Gene3D" id="3.10.129.10">
    <property type="entry name" value="Hotdog Thioesterase"/>
    <property type="match status" value="1"/>
</dbReference>
<dbReference type="HAMAP" id="MF_00406">
    <property type="entry name" value="FabZ"/>
    <property type="match status" value="1"/>
</dbReference>
<dbReference type="InterPro" id="IPR013114">
    <property type="entry name" value="FabA_FabZ"/>
</dbReference>
<dbReference type="InterPro" id="IPR010084">
    <property type="entry name" value="FabZ"/>
</dbReference>
<dbReference type="InterPro" id="IPR029069">
    <property type="entry name" value="HotDog_dom_sf"/>
</dbReference>
<dbReference type="NCBIfam" id="TIGR01750">
    <property type="entry name" value="fabZ"/>
    <property type="match status" value="1"/>
</dbReference>
<dbReference type="NCBIfam" id="NF000582">
    <property type="entry name" value="PRK00006.1"/>
    <property type="match status" value="1"/>
</dbReference>
<dbReference type="PANTHER" id="PTHR30272">
    <property type="entry name" value="3-HYDROXYACYL-[ACYL-CARRIER-PROTEIN] DEHYDRATASE"/>
    <property type="match status" value="1"/>
</dbReference>
<dbReference type="PANTHER" id="PTHR30272:SF1">
    <property type="entry name" value="3-HYDROXYACYL-[ACYL-CARRIER-PROTEIN] DEHYDRATASE"/>
    <property type="match status" value="1"/>
</dbReference>
<dbReference type="Pfam" id="PF07977">
    <property type="entry name" value="FabA"/>
    <property type="match status" value="1"/>
</dbReference>
<dbReference type="SUPFAM" id="SSF54637">
    <property type="entry name" value="Thioesterase/thiol ester dehydrase-isomerase"/>
    <property type="match status" value="1"/>
</dbReference>
<feature type="chain" id="PRO_1000134709" description="3-hydroxyacyl-[acyl-carrier-protein] dehydratase FabZ">
    <location>
        <begin position="1"/>
        <end position="154"/>
    </location>
</feature>
<feature type="active site" evidence="1">
    <location>
        <position position="54"/>
    </location>
</feature>
<comment type="function">
    <text evidence="1">Involved in unsaturated fatty acids biosynthesis. Catalyzes the dehydration of short chain beta-hydroxyacyl-ACPs and long chain saturated and unsaturated beta-hydroxyacyl-ACPs.</text>
</comment>
<comment type="catalytic activity">
    <reaction evidence="1">
        <text>a (3R)-hydroxyacyl-[ACP] = a (2E)-enoyl-[ACP] + H2O</text>
        <dbReference type="Rhea" id="RHEA:13097"/>
        <dbReference type="Rhea" id="RHEA-COMP:9925"/>
        <dbReference type="Rhea" id="RHEA-COMP:9945"/>
        <dbReference type="ChEBI" id="CHEBI:15377"/>
        <dbReference type="ChEBI" id="CHEBI:78784"/>
        <dbReference type="ChEBI" id="CHEBI:78827"/>
        <dbReference type="EC" id="4.2.1.59"/>
    </reaction>
</comment>
<comment type="subcellular location">
    <subcellularLocation>
        <location evidence="1">Cytoplasm</location>
    </subcellularLocation>
</comment>
<comment type="similarity">
    <text evidence="1">Belongs to the thioester dehydratase family. FabZ subfamily.</text>
</comment>
<protein>
    <recommendedName>
        <fullName evidence="1">3-hydroxyacyl-[acyl-carrier-protein] dehydratase FabZ</fullName>
        <ecNumber evidence="1">4.2.1.59</ecNumber>
    </recommendedName>
    <alternativeName>
        <fullName evidence="1">(3R)-hydroxymyristoyl-[acyl-carrier-protein] dehydratase</fullName>
        <shortName evidence="1">(3R)-hydroxymyristoyl-ACP dehydrase</shortName>
    </alternativeName>
    <alternativeName>
        <fullName evidence="1">Beta-hydroxyacyl-ACP dehydratase</fullName>
    </alternativeName>
</protein>
<gene>
    <name evidence="1" type="primary">fabZ</name>
    <name type="ordered locus">Sbal223_2891</name>
</gene>
<proteinExistence type="inferred from homology"/>
<accession>B8E7Q5</accession>
<evidence type="ECO:0000255" key="1">
    <source>
        <dbReference type="HAMAP-Rule" id="MF_00406"/>
    </source>
</evidence>
<name>FABZ_SHEB2</name>
<sequence>MSNQMNTMDIKEILKYLPHRYPFLLIDRVLDYTPGVSLQAIKNVSINEPFFQGHFPIQPVMPGVLILEAMAQATGLLAFKTMSSDVPPPGVLYYFAGIDNARFRRVVEPGDQIHFDVKMIKERRGIGVFYGEAKVDGEVVCSAEIMCARREISQ</sequence>
<reference key="1">
    <citation type="submission" date="2008-12" db="EMBL/GenBank/DDBJ databases">
        <title>Complete sequence of chromosome of Shewanella baltica OS223.</title>
        <authorList>
            <consortium name="US DOE Joint Genome Institute"/>
            <person name="Lucas S."/>
            <person name="Copeland A."/>
            <person name="Lapidus A."/>
            <person name="Glavina del Rio T."/>
            <person name="Dalin E."/>
            <person name="Tice H."/>
            <person name="Bruce D."/>
            <person name="Goodwin L."/>
            <person name="Pitluck S."/>
            <person name="Chertkov O."/>
            <person name="Meincke L."/>
            <person name="Brettin T."/>
            <person name="Detter J.C."/>
            <person name="Han C."/>
            <person name="Kuske C.R."/>
            <person name="Larimer F."/>
            <person name="Land M."/>
            <person name="Hauser L."/>
            <person name="Kyrpides N."/>
            <person name="Ovchinnikova G."/>
            <person name="Brettar I."/>
            <person name="Rodrigues J."/>
            <person name="Konstantinidis K."/>
            <person name="Tiedje J."/>
        </authorList>
    </citation>
    <scope>NUCLEOTIDE SEQUENCE [LARGE SCALE GENOMIC DNA]</scope>
    <source>
        <strain>OS223</strain>
    </source>
</reference>
<organism>
    <name type="scientific">Shewanella baltica (strain OS223)</name>
    <dbReference type="NCBI Taxonomy" id="407976"/>
    <lineage>
        <taxon>Bacteria</taxon>
        <taxon>Pseudomonadati</taxon>
        <taxon>Pseudomonadota</taxon>
        <taxon>Gammaproteobacteria</taxon>
        <taxon>Alteromonadales</taxon>
        <taxon>Shewanellaceae</taxon>
        <taxon>Shewanella</taxon>
    </lineage>
</organism>
<keyword id="KW-0963">Cytoplasm</keyword>
<keyword id="KW-0441">Lipid A biosynthesis</keyword>
<keyword id="KW-0444">Lipid biosynthesis</keyword>
<keyword id="KW-0443">Lipid metabolism</keyword>
<keyword id="KW-0456">Lyase</keyword>